<gene>
    <name type="ordered locus">BPUM_0777</name>
</gene>
<feature type="chain" id="PRO_0000364799" description="Ferredoxin--NADP reductase 1">
    <location>
        <begin position="1"/>
        <end position="346"/>
    </location>
</feature>
<feature type="binding site" evidence="1">
    <location>
        <position position="37"/>
    </location>
    <ligand>
        <name>FAD</name>
        <dbReference type="ChEBI" id="CHEBI:57692"/>
    </ligand>
</feature>
<feature type="binding site" evidence="1">
    <location>
        <position position="45"/>
    </location>
    <ligand>
        <name>FAD</name>
        <dbReference type="ChEBI" id="CHEBI:57692"/>
    </ligand>
</feature>
<feature type="binding site" evidence="1">
    <location>
        <position position="49"/>
    </location>
    <ligand>
        <name>FAD</name>
        <dbReference type="ChEBI" id="CHEBI:57692"/>
    </ligand>
</feature>
<feature type="binding site" evidence="1">
    <location>
        <position position="89"/>
    </location>
    <ligand>
        <name>FAD</name>
        <dbReference type="ChEBI" id="CHEBI:57692"/>
    </ligand>
</feature>
<feature type="binding site" evidence="1">
    <location>
        <position position="124"/>
    </location>
    <ligand>
        <name>FAD</name>
        <dbReference type="ChEBI" id="CHEBI:57692"/>
    </ligand>
</feature>
<feature type="binding site" evidence="1">
    <location>
        <position position="287"/>
    </location>
    <ligand>
        <name>FAD</name>
        <dbReference type="ChEBI" id="CHEBI:57692"/>
    </ligand>
</feature>
<feature type="binding site" evidence="1">
    <location>
        <position position="328"/>
    </location>
    <ligand>
        <name>FAD</name>
        <dbReference type="ChEBI" id="CHEBI:57692"/>
    </ligand>
</feature>
<protein>
    <recommendedName>
        <fullName evidence="1">Ferredoxin--NADP reductase 1</fullName>
        <shortName evidence="1">FNR 1</shortName>
        <shortName evidence="1">Fd-NADP(+) reductase 1</shortName>
        <ecNumber evidence="1">1.18.1.2</ecNumber>
    </recommendedName>
</protein>
<name>FENR1_BACP2</name>
<sequence length="346" mass="38418">MTEQLELFDVTIIGGGPAGMYTAFYSGMRDLKTKVLEYNESLGGKILLYPEKVIWDVGGLPPTRGEQLIQQLEKQAKTFEPEIALNQKITSFERDEHQNILLTAENGDRHLTKTLILAMGHGIPVQRKLEIEHADRYEVTNLYYTVQELKTFAGKRVVISGGGDSAVDWANALVPIAESVTVVHRRDMFGGHEKNVANMKASCARILTPHELTDLHGQGDKIDAVTIQHLETGEIERIETDAVIVNHGMKGDLSVLSEWGLKQGEWGLIEVNEKMETNLPGVYAVGDLCTHKSKVRLIAGTFVDGVNALNSAKLYIEPEAEKVAYVSSHNERFKEKNKELQTVGAR</sequence>
<organism>
    <name type="scientific">Bacillus pumilus (strain SAFR-032)</name>
    <dbReference type="NCBI Taxonomy" id="315750"/>
    <lineage>
        <taxon>Bacteria</taxon>
        <taxon>Bacillati</taxon>
        <taxon>Bacillota</taxon>
        <taxon>Bacilli</taxon>
        <taxon>Bacillales</taxon>
        <taxon>Bacillaceae</taxon>
        <taxon>Bacillus</taxon>
    </lineage>
</organism>
<comment type="catalytic activity">
    <reaction evidence="1">
        <text>2 reduced [2Fe-2S]-[ferredoxin] + NADP(+) + H(+) = 2 oxidized [2Fe-2S]-[ferredoxin] + NADPH</text>
        <dbReference type="Rhea" id="RHEA:20125"/>
        <dbReference type="Rhea" id="RHEA-COMP:10000"/>
        <dbReference type="Rhea" id="RHEA-COMP:10001"/>
        <dbReference type="ChEBI" id="CHEBI:15378"/>
        <dbReference type="ChEBI" id="CHEBI:33737"/>
        <dbReference type="ChEBI" id="CHEBI:33738"/>
        <dbReference type="ChEBI" id="CHEBI:57783"/>
        <dbReference type="ChEBI" id="CHEBI:58349"/>
        <dbReference type="EC" id="1.18.1.2"/>
    </reaction>
</comment>
<comment type="cofactor">
    <cofactor evidence="1">
        <name>FAD</name>
        <dbReference type="ChEBI" id="CHEBI:57692"/>
    </cofactor>
    <text evidence="1">Binds 1 FAD per subunit.</text>
</comment>
<comment type="subunit">
    <text evidence="1">Homodimer.</text>
</comment>
<comment type="similarity">
    <text evidence="1">Belongs to the ferredoxin--NADP reductase type 2 family.</text>
</comment>
<dbReference type="EC" id="1.18.1.2" evidence="1"/>
<dbReference type="EMBL" id="CP000813">
    <property type="protein sequence ID" value="ABV61462.1"/>
    <property type="molecule type" value="Genomic_DNA"/>
</dbReference>
<dbReference type="RefSeq" id="WP_012009303.1">
    <property type="nucleotide sequence ID" value="NC_009848.4"/>
</dbReference>
<dbReference type="SMR" id="A8FB45"/>
<dbReference type="STRING" id="315750.BPUM_0777"/>
<dbReference type="GeneID" id="5620022"/>
<dbReference type="KEGG" id="bpu:BPUM_0777"/>
<dbReference type="eggNOG" id="COG0492">
    <property type="taxonomic scope" value="Bacteria"/>
</dbReference>
<dbReference type="HOGENOM" id="CLU_031864_5_5_9"/>
<dbReference type="OrthoDB" id="9806179at2"/>
<dbReference type="Proteomes" id="UP000001355">
    <property type="component" value="Chromosome"/>
</dbReference>
<dbReference type="GO" id="GO:0004324">
    <property type="term" value="F:ferredoxin-NADP+ reductase activity"/>
    <property type="evidence" value="ECO:0007669"/>
    <property type="project" value="UniProtKB-UniRule"/>
</dbReference>
<dbReference type="GO" id="GO:0050660">
    <property type="term" value="F:flavin adenine dinucleotide binding"/>
    <property type="evidence" value="ECO:0007669"/>
    <property type="project" value="UniProtKB-UniRule"/>
</dbReference>
<dbReference type="GO" id="GO:0050661">
    <property type="term" value="F:NADP binding"/>
    <property type="evidence" value="ECO:0007669"/>
    <property type="project" value="UniProtKB-UniRule"/>
</dbReference>
<dbReference type="Gene3D" id="3.50.50.60">
    <property type="entry name" value="FAD/NAD(P)-binding domain"/>
    <property type="match status" value="2"/>
</dbReference>
<dbReference type="HAMAP" id="MF_01685">
    <property type="entry name" value="FENR2"/>
    <property type="match status" value="1"/>
</dbReference>
<dbReference type="InterPro" id="IPR036188">
    <property type="entry name" value="FAD/NAD-bd_sf"/>
</dbReference>
<dbReference type="InterPro" id="IPR023753">
    <property type="entry name" value="FAD/NAD-binding_dom"/>
</dbReference>
<dbReference type="InterPro" id="IPR022890">
    <property type="entry name" value="Fd--NADP_Rdtase_type_2"/>
</dbReference>
<dbReference type="InterPro" id="IPR050097">
    <property type="entry name" value="Ferredoxin-NADP_redctase_2"/>
</dbReference>
<dbReference type="PANTHER" id="PTHR48105">
    <property type="entry name" value="THIOREDOXIN REDUCTASE 1-RELATED-RELATED"/>
    <property type="match status" value="1"/>
</dbReference>
<dbReference type="Pfam" id="PF07992">
    <property type="entry name" value="Pyr_redox_2"/>
    <property type="match status" value="1"/>
</dbReference>
<dbReference type="PRINTS" id="PR00368">
    <property type="entry name" value="FADPNR"/>
</dbReference>
<dbReference type="PRINTS" id="PR00469">
    <property type="entry name" value="PNDRDTASEII"/>
</dbReference>
<dbReference type="SUPFAM" id="SSF51905">
    <property type="entry name" value="FAD/NAD(P)-binding domain"/>
    <property type="match status" value="1"/>
</dbReference>
<keyword id="KW-0274">FAD</keyword>
<keyword id="KW-0285">Flavoprotein</keyword>
<keyword id="KW-0521">NADP</keyword>
<keyword id="KW-0560">Oxidoreductase</keyword>
<accession>A8FB45</accession>
<reference key="1">
    <citation type="journal article" date="2007" name="PLoS ONE">
        <title>Paradoxical DNA repair and peroxide resistance gene conservation in Bacillus pumilus SAFR-032.</title>
        <authorList>
            <person name="Gioia J."/>
            <person name="Yerrapragada S."/>
            <person name="Qin X."/>
            <person name="Jiang H."/>
            <person name="Igboeli O.C."/>
            <person name="Muzny D."/>
            <person name="Dugan-Rocha S."/>
            <person name="Ding Y."/>
            <person name="Hawes A."/>
            <person name="Liu W."/>
            <person name="Perez L."/>
            <person name="Kovar C."/>
            <person name="Dinh H."/>
            <person name="Lee S."/>
            <person name="Nazareth L."/>
            <person name="Blyth P."/>
            <person name="Holder M."/>
            <person name="Buhay C."/>
            <person name="Tirumalai M.R."/>
            <person name="Liu Y."/>
            <person name="Dasgupta I."/>
            <person name="Bokhetache L."/>
            <person name="Fujita M."/>
            <person name="Karouia F."/>
            <person name="Eswara Moorthy P."/>
            <person name="Siefert J."/>
            <person name="Uzman A."/>
            <person name="Buzumbo P."/>
            <person name="Verma A."/>
            <person name="Zwiya H."/>
            <person name="McWilliams B.D."/>
            <person name="Olowu A."/>
            <person name="Clinkenbeard K.D."/>
            <person name="Newcombe D."/>
            <person name="Golebiewski L."/>
            <person name="Petrosino J.F."/>
            <person name="Nicholson W.L."/>
            <person name="Fox G.E."/>
            <person name="Venkateswaran K."/>
            <person name="Highlander S.K."/>
            <person name="Weinstock G.M."/>
        </authorList>
    </citation>
    <scope>NUCLEOTIDE SEQUENCE [LARGE SCALE GENOMIC DNA]</scope>
    <source>
        <strain>SAFR-032</strain>
    </source>
</reference>
<proteinExistence type="inferred from homology"/>
<evidence type="ECO:0000255" key="1">
    <source>
        <dbReference type="HAMAP-Rule" id="MF_01685"/>
    </source>
</evidence>